<protein>
    <recommendedName>
        <fullName>Probable cytochrome P450 9h1</fullName>
        <ecNumber>1.14.-.-</ecNumber>
    </recommendedName>
    <alternativeName>
        <fullName>CYPIXH1</fullName>
    </alternativeName>
</protein>
<proteinExistence type="inferred from homology"/>
<sequence>MDQSMIALALFIILLVLLYKWSVAKYDVFSERGVSHEKPWPLIGNIPLKAMIGGMPVLKKMIELHTKHTGSPVYGIYALRDAVFFVRDPELIKLIGIKEFDHFVNHNSMHNNIQESILSKSLISLRDGRWKEMRNILTPAFTGSKMRIMYDLIQSCSEEGVIHIQEQLELSQDASIELEMKDYFTRFANDVIATVAFGISINSFRRKDNEFFRIGQAMSRISAWSVVKAMLYALFPRLMKVLRIQVLDTKNIDYFSSLVTAAMRYRQEHKVVRPDMIHLLMEAKQQRLADLSDKSKDELYYSEFTADDLLAQCLLFFFAGFEIISSSLCFLTHELCLNPTVQDRLYEEIISVHEELKGQPLTYDKLTKMKYLDMVVLEALRKWPPSISTDRECRQDIDLFDENGQKLFSARKGDVLQIPIFSLHHDPENFEDPEFFNPERFADGHALESRVYMPFGVGPRNCIGNRMALMELKSIVYQLLLNFKLLPAKRTSRDLLNDIRGHGLKPKNGFWLKFEARQ</sequence>
<name>CP9H1_DROME</name>
<comment type="function">
    <text evidence="1">May be involved in the metabolism of insect hormones and in the breakdown of synthetic insecticides.</text>
</comment>
<comment type="cofactor">
    <cofactor evidence="1">
        <name>heme</name>
        <dbReference type="ChEBI" id="CHEBI:30413"/>
    </cofactor>
</comment>
<comment type="subcellular location">
    <subcellularLocation>
        <location evidence="2">Endoplasmic reticulum membrane</location>
        <topology evidence="2">Peripheral membrane protein</topology>
    </subcellularLocation>
    <subcellularLocation>
        <location evidence="2">Microsome membrane</location>
        <topology evidence="2">Peripheral membrane protein</topology>
    </subcellularLocation>
</comment>
<comment type="similarity">
    <text evidence="2">Belongs to the cytochrome P450 family.</text>
</comment>
<keyword id="KW-0256">Endoplasmic reticulum</keyword>
<keyword id="KW-0349">Heme</keyword>
<keyword id="KW-0408">Iron</keyword>
<keyword id="KW-0472">Membrane</keyword>
<keyword id="KW-0479">Metal-binding</keyword>
<keyword id="KW-0492">Microsome</keyword>
<keyword id="KW-0503">Monooxygenase</keyword>
<keyword id="KW-0560">Oxidoreductase</keyword>
<keyword id="KW-1185">Reference proteome</keyword>
<evidence type="ECO:0000250" key="1"/>
<evidence type="ECO:0000305" key="2"/>
<feature type="chain" id="PRO_0000051921" description="Probable cytochrome P450 9h1">
    <location>
        <begin position="1"/>
        <end position="518"/>
    </location>
</feature>
<feature type="binding site" description="axial binding residue" evidence="1">
    <location>
        <position position="462"/>
    </location>
    <ligand>
        <name>heme</name>
        <dbReference type="ChEBI" id="CHEBI:30413"/>
    </ligand>
    <ligandPart>
        <name>Fe</name>
        <dbReference type="ChEBI" id="CHEBI:18248"/>
    </ligandPart>
</feature>
<organism>
    <name type="scientific">Drosophila melanogaster</name>
    <name type="common">Fruit fly</name>
    <dbReference type="NCBI Taxonomy" id="7227"/>
    <lineage>
        <taxon>Eukaryota</taxon>
        <taxon>Metazoa</taxon>
        <taxon>Ecdysozoa</taxon>
        <taxon>Arthropoda</taxon>
        <taxon>Hexapoda</taxon>
        <taxon>Insecta</taxon>
        <taxon>Pterygota</taxon>
        <taxon>Neoptera</taxon>
        <taxon>Endopterygota</taxon>
        <taxon>Diptera</taxon>
        <taxon>Brachycera</taxon>
        <taxon>Muscomorpha</taxon>
        <taxon>Ephydroidea</taxon>
        <taxon>Drosophilidae</taxon>
        <taxon>Drosophila</taxon>
        <taxon>Sophophora</taxon>
    </lineage>
</organism>
<dbReference type="EC" id="1.14.-.-"/>
<dbReference type="EMBL" id="AE013599">
    <property type="protein sequence ID" value="AAF58453.1"/>
    <property type="molecule type" value="Genomic_DNA"/>
</dbReference>
<dbReference type="RefSeq" id="NP_610820.1">
    <property type="nucleotide sequence ID" value="NM_136976.2"/>
</dbReference>
<dbReference type="SMR" id="Q9V6H1"/>
<dbReference type="FunCoup" id="Q9V6H1">
    <property type="interactions" value="26"/>
</dbReference>
<dbReference type="IntAct" id="Q9V6H1">
    <property type="interactions" value="1"/>
</dbReference>
<dbReference type="STRING" id="7227.FBpp0086933"/>
<dbReference type="PaxDb" id="7227-FBpp0086933"/>
<dbReference type="DNASU" id="36412"/>
<dbReference type="EnsemblMetazoa" id="FBtr0087820">
    <property type="protein sequence ID" value="FBpp0086933"/>
    <property type="gene ID" value="FBgn0033775"/>
</dbReference>
<dbReference type="GeneID" id="36412"/>
<dbReference type="KEGG" id="dme:Dmel_CG17577"/>
<dbReference type="UCSC" id="CG17577-RA">
    <property type="organism name" value="d. melanogaster"/>
</dbReference>
<dbReference type="AGR" id="FB:FBgn0033775"/>
<dbReference type="CTD" id="36412"/>
<dbReference type="FlyBase" id="FBgn0033775">
    <property type="gene designation" value="Cyp9h1"/>
</dbReference>
<dbReference type="VEuPathDB" id="VectorBase:FBgn0033775"/>
<dbReference type="eggNOG" id="KOG0158">
    <property type="taxonomic scope" value="Eukaryota"/>
</dbReference>
<dbReference type="GeneTree" id="ENSGT00940000165057"/>
<dbReference type="HOGENOM" id="CLU_001570_5_2_1"/>
<dbReference type="InParanoid" id="Q9V6H1"/>
<dbReference type="OMA" id="RRKDNEF"/>
<dbReference type="OrthoDB" id="2789670at2759"/>
<dbReference type="PhylomeDB" id="Q9V6H1"/>
<dbReference type="BioGRID-ORCS" id="36412">
    <property type="hits" value="0 hits in 3 CRISPR screens"/>
</dbReference>
<dbReference type="GenomeRNAi" id="36412"/>
<dbReference type="PRO" id="PR:Q9V6H1"/>
<dbReference type="Proteomes" id="UP000000803">
    <property type="component" value="Chromosome 2R"/>
</dbReference>
<dbReference type="Bgee" id="FBgn0033775">
    <property type="expression patterns" value="Expressed in adult anterior midgut class II enteroendocrine cell in adult midgut (Drosophila) and 40 other cell types or tissues"/>
</dbReference>
<dbReference type="ExpressionAtlas" id="Q9V6H1">
    <property type="expression patterns" value="baseline and differential"/>
</dbReference>
<dbReference type="GO" id="GO:0005789">
    <property type="term" value="C:endoplasmic reticulum membrane"/>
    <property type="evidence" value="ECO:0007669"/>
    <property type="project" value="UniProtKB-SubCell"/>
</dbReference>
<dbReference type="GO" id="GO:0020037">
    <property type="term" value="F:heme binding"/>
    <property type="evidence" value="ECO:0007669"/>
    <property type="project" value="InterPro"/>
</dbReference>
<dbReference type="GO" id="GO:0005506">
    <property type="term" value="F:iron ion binding"/>
    <property type="evidence" value="ECO:0007669"/>
    <property type="project" value="InterPro"/>
</dbReference>
<dbReference type="GO" id="GO:0004497">
    <property type="term" value="F:monooxygenase activity"/>
    <property type="evidence" value="ECO:0007669"/>
    <property type="project" value="UniProtKB-KW"/>
</dbReference>
<dbReference type="GO" id="GO:0016705">
    <property type="term" value="F:oxidoreductase activity, acting on paired donors, with incorporation or reduction of molecular oxygen"/>
    <property type="evidence" value="ECO:0007669"/>
    <property type="project" value="InterPro"/>
</dbReference>
<dbReference type="CDD" id="cd11056">
    <property type="entry name" value="CYP6-like"/>
    <property type="match status" value="1"/>
</dbReference>
<dbReference type="FunFam" id="1.10.630.10:FF:000042">
    <property type="entry name" value="Cytochrome P450"/>
    <property type="match status" value="1"/>
</dbReference>
<dbReference type="Gene3D" id="1.10.630.10">
    <property type="entry name" value="Cytochrome P450"/>
    <property type="match status" value="1"/>
</dbReference>
<dbReference type="InterPro" id="IPR001128">
    <property type="entry name" value="Cyt_P450"/>
</dbReference>
<dbReference type="InterPro" id="IPR017972">
    <property type="entry name" value="Cyt_P450_CS"/>
</dbReference>
<dbReference type="InterPro" id="IPR002401">
    <property type="entry name" value="Cyt_P450_E_grp-I"/>
</dbReference>
<dbReference type="InterPro" id="IPR036396">
    <property type="entry name" value="Cyt_P450_sf"/>
</dbReference>
<dbReference type="InterPro" id="IPR050476">
    <property type="entry name" value="Insect_CytP450_Detox"/>
</dbReference>
<dbReference type="PANTHER" id="PTHR24292:SF54">
    <property type="entry name" value="CYP9F3-RELATED"/>
    <property type="match status" value="1"/>
</dbReference>
<dbReference type="PANTHER" id="PTHR24292">
    <property type="entry name" value="CYTOCHROME P450"/>
    <property type="match status" value="1"/>
</dbReference>
<dbReference type="Pfam" id="PF00067">
    <property type="entry name" value="p450"/>
    <property type="match status" value="1"/>
</dbReference>
<dbReference type="PRINTS" id="PR00463">
    <property type="entry name" value="EP450I"/>
</dbReference>
<dbReference type="PRINTS" id="PR00385">
    <property type="entry name" value="P450"/>
</dbReference>
<dbReference type="SUPFAM" id="SSF48264">
    <property type="entry name" value="Cytochrome P450"/>
    <property type="match status" value="1"/>
</dbReference>
<dbReference type="PROSITE" id="PS00086">
    <property type="entry name" value="CYTOCHROME_P450"/>
    <property type="match status" value="1"/>
</dbReference>
<gene>
    <name type="primary">Cyp9h1</name>
    <name type="ORF">CG17577</name>
</gene>
<accession>Q9V6H1</accession>
<reference key="1">
    <citation type="journal article" date="2000" name="Science">
        <title>The genome sequence of Drosophila melanogaster.</title>
        <authorList>
            <person name="Adams M.D."/>
            <person name="Celniker S.E."/>
            <person name="Holt R.A."/>
            <person name="Evans C.A."/>
            <person name="Gocayne J.D."/>
            <person name="Amanatides P.G."/>
            <person name="Scherer S.E."/>
            <person name="Li P.W."/>
            <person name="Hoskins R.A."/>
            <person name="Galle R.F."/>
            <person name="George R.A."/>
            <person name="Lewis S.E."/>
            <person name="Richards S."/>
            <person name="Ashburner M."/>
            <person name="Henderson S.N."/>
            <person name="Sutton G.G."/>
            <person name="Wortman J.R."/>
            <person name="Yandell M.D."/>
            <person name="Zhang Q."/>
            <person name="Chen L.X."/>
            <person name="Brandon R.C."/>
            <person name="Rogers Y.-H.C."/>
            <person name="Blazej R.G."/>
            <person name="Champe M."/>
            <person name="Pfeiffer B.D."/>
            <person name="Wan K.H."/>
            <person name="Doyle C."/>
            <person name="Baxter E.G."/>
            <person name="Helt G."/>
            <person name="Nelson C.R."/>
            <person name="Miklos G.L.G."/>
            <person name="Abril J.F."/>
            <person name="Agbayani A."/>
            <person name="An H.-J."/>
            <person name="Andrews-Pfannkoch C."/>
            <person name="Baldwin D."/>
            <person name="Ballew R.M."/>
            <person name="Basu A."/>
            <person name="Baxendale J."/>
            <person name="Bayraktaroglu L."/>
            <person name="Beasley E.M."/>
            <person name="Beeson K.Y."/>
            <person name="Benos P.V."/>
            <person name="Berman B.P."/>
            <person name="Bhandari D."/>
            <person name="Bolshakov S."/>
            <person name="Borkova D."/>
            <person name="Botchan M.R."/>
            <person name="Bouck J."/>
            <person name="Brokstein P."/>
            <person name="Brottier P."/>
            <person name="Burtis K.C."/>
            <person name="Busam D.A."/>
            <person name="Butler H."/>
            <person name="Cadieu E."/>
            <person name="Center A."/>
            <person name="Chandra I."/>
            <person name="Cherry J.M."/>
            <person name="Cawley S."/>
            <person name="Dahlke C."/>
            <person name="Davenport L.B."/>
            <person name="Davies P."/>
            <person name="de Pablos B."/>
            <person name="Delcher A."/>
            <person name="Deng Z."/>
            <person name="Mays A.D."/>
            <person name="Dew I."/>
            <person name="Dietz S.M."/>
            <person name="Dodson K."/>
            <person name="Doup L.E."/>
            <person name="Downes M."/>
            <person name="Dugan-Rocha S."/>
            <person name="Dunkov B.C."/>
            <person name="Dunn P."/>
            <person name="Durbin K.J."/>
            <person name="Evangelista C.C."/>
            <person name="Ferraz C."/>
            <person name="Ferriera S."/>
            <person name="Fleischmann W."/>
            <person name="Fosler C."/>
            <person name="Gabrielian A.E."/>
            <person name="Garg N.S."/>
            <person name="Gelbart W.M."/>
            <person name="Glasser K."/>
            <person name="Glodek A."/>
            <person name="Gong F."/>
            <person name="Gorrell J.H."/>
            <person name="Gu Z."/>
            <person name="Guan P."/>
            <person name="Harris M."/>
            <person name="Harris N.L."/>
            <person name="Harvey D.A."/>
            <person name="Heiman T.J."/>
            <person name="Hernandez J.R."/>
            <person name="Houck J."/>
            <person name="Hostin D."/>
            <person name="Houston K.A."/>
            <person name="Howland T.J."/>
            <person name="Wei M.-H."/>
            <person name="Ibegwam C."/>
            <person name="Jalali M."/>
            <person name="Kalush F."/>
            <person name="Karpen G.H."/>
            <person name="Ke Z."/>
            <person name="Kennison J.A."/>
            <person name="Ketchum K.A."/>
            <person name="Kimmel B.E."/>
            <person name="Kodira C.D."/>
            <person name="Kraft C.L."/>
            <person name="Kravitz S."/>
            <person name="Kulp D."/>
            <person name="Lai Z."/>
            <person name="Lasko P."/>
            <person name="Lei Y."/>
            <person name="Levitsky A.A."/>
            <person name="Li J.H."/>
            <person name="Li Z."/>
            <person name="Liang Y."/>
            <person name="Lin X."/>
            <person name="Liu X."/>
            <person name="Mattei B."/>
            <person name="McIntosh T.C."/>
            <person name="McLeod M.P."/>
            <person name="McPherson D."/>
            <person name="Merkulov G."/>
            <person name="Milshina N.V."/>
            <person name="Mobarry C."/>
            <person name="Morris J."/>
            <person name="Moshrefi A."/>
            <person name="Mount S.M."/>
            <person name="Moy M."/>
            <person name="Murphy B."/>
            <person name="Murphy L."/>
            <person name="Muzny D.M."/>
            <person name="Nelson D.L."/>
            <person name="Nelson D.R."/>
            <person name="Nelson K.A."/>
            <person name="Nixon K."/>
            <person name="Nusskern D.R."/>
            <person name="Pacleb J.M."/>
            <person name="Palazzolo M."/>
            <person name="Pittman G.S."/>
            <person name="Pan S."/>
            <person name="Pollard J."/>
            <person name="Puri V."/>
            <person name="Reese M.G."/>
            <person name="Reinert K."/>
            <person name="Remington K."/>
            <person name="Saunders R.D.C."/>
            <person name="Scheeler F."/>
            <person name="Shen H."/>
            <person name="Shue B.C."/>
            <person name="Siden-Kiamos I."/>
            <person name="Simpson M."/>
            <person name="Skupski M.P."/>
            <person name="Smith T.J."/>
            <person name="Spier E."/>
            <person name="Spradling A.C."/>
            <person name="Stapleton M."/>
            <person name="Strong R."/>
            <person name="Sun E."/>
            <person name="Svirskas R."/>
            <person name="Tector C."/>
            <person name="Turner R."/>
            <person name="Venter E."/>
            <person name="Wang A.H."/>
            <person name="Wang X."/>
            <person name="Wang Z.-Y."/>
            <person name="Wassarman D.A."/>
            <person name="Weinstock G.M."/>
            <person name="Weissenbach J."/>
            <person name="Williams S.M."/>
            <person name="Woodage T."/>
            <person name="Worley K.C."/>
            <person name="Wu D."/>
            <person name="Yang S."/>
            <person name="Yao Q.A."/>
            <person name="Ye J."/>
            <person name="Yeh R.-F."/>
            <person name="Zaveri J.S."/>
            <person name="Zhan M."/>
            <person name="Zhang G."/>
            <person name="Zhao Q."/>
            <person name="Zheng L."/>
            <person name="Zheng X.H."/>
            <person name="Zhong F.N."/>
            <person name="Zhong W."/>
            <person name="Zhou X."/>
            <person name="Zhu S.C."/>
            <person name="Zhu X."/>
            <person name="Smith H.O."/>
            <person name="Gibbs R.A."/>
            <person name="Myers E.W."/>
            <person name="Rubin G.M."/>
            <person name="Venter J.C."/>
        </authorList>
    </citation>
    <scope>NUCLEOTIDE SEQUENCE [LARGE SCALE GENOMIC DNA]</scope>
    <source>
        <strain>Berkeley</strain>
    </source>
</reference>
<reference key="2">
    <citation type="journal article" date="2002" name="Genome Biol.">
        <title>Annotation of the Drosophila melanogaster euchromatic genome: a systematic review.</title>
        <authorList>
            <person name="Misra S."/>
            <person name="Crosby M.A."/>
            <person name="Mungall C.J."/>
            <person name="Matthews B.B."/>
            <person name="Campbell K.S."/>
            <person name="Hradecky P."/>
            <person name="Huang Y."/>
            <person name="Kaminker J.S."/>
            <person name="Millburn G.H."/>
            <person name="Prochnik S.E."/>
            <person name="Smith C.D."/>
            <person name="Tupy J.L."/>
            <person name="Whitfield E.J."/>
            <person name="Bayraktaroglu L."/>
            <person name="Berman B.P."/>
            <person name="Bettencourt B.R."/>
            <person name="Celniker S.E."/>
            <person name="de Grey A.D.N.J."/>
            <person name="Drysdale R.A."/>
            <person name="Harris N.L."/>
            <person name="Richter J."/>
            <person name="Russo S."/>
            <person name="Schroeder A.J."/>
            <person name="Shu S.Q."/>
            <person name="Stapleton M."/>
            <person name="Yamada C."/>
            <person name="Ashburner M."/>
            <person name="Gelbart W.M."/>
            <person name="Rubin G.M."/>
            <person name="Lewis S.E."/>
        </authorList>
    </citation>
    <scope>GENOME REANNOTATION</scope>
    <source>
        <strain>Berkeley</strain>
    </source>
</reference>